<reference key="1">
    <citation type="journal article" date="2007" name="BMC Plant Biol.">
        <title>Complete plastid genome sequences suggest strong selection for retention of photosynthetic genes in the parasitic plant genus Cuscuta.</title>
        <authorList>
            <person name="McNeal J.R."/>
            <person name="Kuehl J.V."/>
            <person name="Boore J.L."/>
            <person name="dePamphilis C.W."/>
        </authorList>
    </citation>
    <scope>NUCLEOTIDE SEQUENCE [LARGE SCALE GENOMIC DNA]</scope>
</reference>
<comment type="function">
    <text evidence="1">May play a role in photosystem I and II biogenesis.</text>
</comment>
<comment type="subcellular location">
    <subcellularLocation>
        <location evidence="1">Plastid</location>
        <location evidence="1">Chloroplast thylakoid membrane</location>
        <topology evidence="1">Single-pass membrane protein</topology>
    </subcellularLocation>
</comment>
<comment type="similarity">
    <text evidence="1">Belongs to the PsbN family.</text>
</comment>
<comment type="caution">
    <text evidence="1">Originally thought to be a component of PSII; based on experiments in Synechocystis, N.tabacum and barley, and its absence from PSII in T.elongatus and T.vulcanus, this is probably not true.</text>
</comment>
<organism>
    <name type="scientific">Ipomoea purpurea</name>
    <name type="common">Common morning glory</name>
    <name type="synonym">Pharbitis purpurea</name>
    <dbReference type="NCBI Taxonomy" id="4121"/>
    <lineage>
        <taxon>Eukaryota</taxon>
        <taxon>Viridiplantae</taxon>
        <taxon>Streptophyta</taxon>
        <taxon>Embryophyta</taxon>
        <taxon>Tracheophyta</taxon>
        <taxon>Spermatophyta</taxon>
        <taxon>Magnoliopsida</taxon>
        <taxon>eudicotyledons</taxon>
        <taxon>Gunneridae</taxon>
        <taxon>Pentapetalae</taxon>
        <taxon>asterids</taxon>
        <taxon>lamiids</taxon>
        <taxon>Solanales</taxon>
        <taxon>Convolvulaceae</taxon>
        <taxon>Ipomoeeae</taxon>
        <taxon>Ipomoea</taxon>
    </lineage>
</organism>
<dbReference type="EMBL" id="EU118126">
    <property type="protein sequence ID" value="ABV02376.1"/>
    <property type="molecule type" value="Genomic_DNA"/>
</dbReference>
<dbReference type="RefSeq" id="YP_001468336.1">
    <property type="nucleotide sequence ID" value="NC_009808.1"/>
</dbReference>
<dbReference type="SMR" id="A7Y3H6"/>
<dbReference type="GeneID" id="5601220"/>
<dbReference type="GO" id="GO:0009535">
    <property type="term" value="C:chloroplast thylakoid membrane"/>
    <property type="evidence" value="ECO:0007669"/>
    <property type="project" value="UniProtKB-SubCell"/>
</dbReference>
<dbReference type="GO" id="GO:0015979">
    <property type="term" value="P:photosynthesis"/>
    <property type="evidence" value="ECO:0007669"/>
    <property type="project" value="InterPro"/>
</dbReference>
<dbReference type="HAMAP" id="MF_00293">
    <property type="entry name" value="PSII_PsbN"/>
    <property type="match status" value="1"/>
</dbReference>
<dbReference type="InterPro" id="IPR003398">
    <property type="entry name" value="PSII_PsbN"/>
</dbReference>
<dbReference type="PANTHER" id="PTHR35326">
    <property type="entry name" value="PROTEIN PSBN"/>
    <property type="match status" value="1"/>
</dbReference>
<dbReference type="PANTHER" id="PTHR35326:SF3">
    <property type="entry name" value="PROTEIN PSBN"/>
    <property type="match status" value="1"/>
</dbReference>
<dbReference type="Pfam" id="PF02468">
    <property type="entry name" value="PsbN"/>
    <property type="match status" value="1"/>
</dbReference>
<proteinExistence type="inferred from homology"/>
<protein>
    <recommendedName>
        <fullName evidence="1">Protein PsbN</fullName>
    </recommendedName>
</protein>
<sequence>METATLVTIFLSGLLVSFTGYALYTAFGQPSQQLRDPFEEHGD</sequence>
<geneLocation type="chloroplast"/>
<feature type="chain" id="PRO_0000362197" description="Protein PsbN">
    <location>
        <begin position="1"/>
        <end position="43"/>
    </location>
</feature>
<feature type="transmembrane region" description="Helical" evidence="1">
    <location>
        <begin position="7"/>
        <end position="29"/>
    </location>
</feature>
<keyword id="KW-0150">Chloroplast</keyword>
<keyword id="KW-0472">Membrane</keyword>
<keyword id="KW-0934">Plastid</keyword>
<keyword id="KW-0793">Thylakoid</keyword>
<keyword id="KW-0812">Transmembrane</keyword>
<keyword id="KW-1133">Transmembrane helix</keyword>
<evidence type="ECO:0000255" key="1">
    <source>
        <dbReference type="HAMAP-Rule" id="MF_00293"/>
    </source>
</evidence>
<name>PSBN_IPOPU</name>
<accession>A7Y3H6</accession>
<gene>
    <name evidence="1" type="primary">psbN</name>
</gene>